<feature type="chain" id="PRO_1000011346" description="Probable endonuclease 4">
    <location>
        <begin position="1"/>
        <end position="295"/>
    </location>
</feature>
<feature type="binding site" evidence="1">
    <location>
        <position position="78"/>
    </location>
    <ligand>
        <name>Zn(2+)</name>
        <dbReference type="ChEBI" id="CHEBI:29105"/>
        <label>1</label>
    </ligand>
</feature>
<feature type="binding site" evidence="1">
    <location>
        <position position="118"/>
    </location>
    <ligand>
        <name>Zn(2+)</name>
        <dbReference type="ChEBI" id="CHEBI:29105"/>
        <label>1</label>
    </ligand>
</feature>
<feature type="binding site" evidence="1">
    <location>
        <position position="154"/>
    </location>
    <ligand>
        <name>Zn(2+)</name>
        <dbReference type="ChEBI" id="CHEBI:29105"/>
        <label>1</label>
    </ligand>
</feature>
<feature type="binding site" evidence="1">
    <location>
        <position position="154"/>
    </location>
    <ligand>
        <name>Zn(2+)</name>
        <dbReference type="ChEBI" id="CHEBI:29105"/>
        <label>2</label>
    </ligand>
</feature>
<feature type="binding site" evidence="1">
    <location>
        <position position="188"/>
    </location>
    <ligand>
        <name>Zn(2+)</name>
        <dbReference type="ChEBI" id="CHEBI:29105"/>
        <label>2</label>
    </ligand>
</feature>
<feature type="binding site" evidence="1">
    <location>
        <position position="191"/>
    </location>
    <ligand>
        <name>Zn(2+)</name>
        <dbReference type="ChEBI" id="CHEBI:29105"/>
        <label>3</label>
    </ligand>
</feature>
<feature type="binding site" evidence="1">
    <location>
        <position position="225"/>
    </location>
    <ligand>
        <name>Zn(2+)</name>
        <dbReference type="ChEBI" id="CHEBI:29105"/>
        <label>2</label>
    </ligand>
</feature>
<feature type="binding site" evidence="1">
    <location>
        <position position="238"/>
    </location>
    <ligand>
        <name>Zn(2+)</name>
        <dbReference type="ChEBI" id="CHEBI:29105"/>
        <label>3</label>
    </ligand>
</feature>
<feature type="binding site" evidence="1">
    <location>
        <position position="240"/>
    </location>
    <ligand>
        <name>Zn(2+)</name>
        <dbReference type="ChEBI" id="CHEBI:29105"/>
        <label>3</label>
    </ligand>
</feature>
<feature type="binding site" evidence="1">
    <location>
        <position position="270"/>
    </location>
    <ligand>
        <name>Zn(2+)</name>
        <dbReference type="ChEBI" id="CHEBI:29105"/>
        <label>2</label>
    </ligand>
</feature>
<name>END4_VIBC1</name>
<keyword id="KW-0227">DNA damage</keyword>
<keyword id="KW-0234">DNA repair</keyword>
<keyword id="KW-0255">Endonuclease</keyword>
<keyword id="KW-0378">Hydrolase</keyword>
<keyword id="KW-0479">Metal-binding</keyword>
<keyword id="KW-0540">Nuclease</keyword>
<keyword id="KW-0862">Zinc</keyword>
<organism>
    <name type="scientific">Vibrio campbellii (strain ATCC BAA-1116)</name>
    <dbReference type="NCBI Taxonomy" id="2902295"/>
    <lineage>
        <taxon>Bacteria</taxon>
        <taxon>Pseudomonadati</taxon>
        <taxon>Pseudomonadota</taxon>
        <taxon>Gammaproteobacteria</taxon>
        <taxon>Vibrionales</taxon>
        <taxon>Vibrionaceae</taxon>
        <taxon>Vibrio</taxon>
    </lineage>
</organism>
<accession>A7MS84</accession>
<protein>
    <recommendedName>
        <fullName evidence="1">Probable endonuclease 4</fullName>
        <ecNumber evidence="1">3.1.21.2</ecNumber>
    </recommendedName>
    <alternativeName>
        <fullName evidence="1">Endodeoxyribonuclease IV</fullName>
    </alternativeName>
    <alternativeName>
        <fullName evidence="1">Endonuclease IV</fullName>
    </alternativeName>
</protein>
<proteinExistence type="inferred from homology"/>
<evidence type="ECO:0000255" key="1">
    <source>
        <dbReference type="HAMAP-Rule" id="MF_00152"/>
    </source>
</evidence>
<gene>
    <name evidence="1" type="primary">nfo</name>
    <name type="ordered locus">VIBHAR_00944</name>
</gene>
<dbReference type="EC" id="3.1.21.2" evidence="1"/>
<dbReference type="EMBL" id="CP000789">
    <property type="protein sequence ID" value="ABU69943.1"/>
    <property type="molecule type" value="Genomic_DNA"/>
</dbReference>
<dbReference type="RefSeq" id="WP_012127019.1">
    <property type="nucleotide sequence ID" value="NC_009783.1"/>
</dbReference>
<dbReference type="SMR" id="A7MS84"/>
<dbReference type="KEGG" id="vha:VIBHAR_00944"/>
<dbReference type="PATRIC" id="fig|338187.25.peg.1677"/>
<dbReference type="Proteomes" id="UP000008152">
    <property type="component" value="Chromosome I"/>
</dbReference>
<dbReference type="GO" id="GO:0008833">
    <property type="term" value="F:deoxyribonuclease IV (phage-T4-induced) activity"/>
    <property type="evidence" value="ECO:0007669"/>
    <property type="project" value="UniProtKB-UniRule"/>
</dbReference>
<dbReference type="GO" id="GO:0003677">
    <property type="term" value="F:DNA binding"/>
    <property type="evidence" value="ECO:0007669"/>
    <property type="project" value="InterPro"/>
</dbReference>
<dbReference type="GO" id="GO:0003906">
    <property type="term" value="F:DNA-(apurinic or apyrimidinic site) endonuclease activity"/>
    <property type="evidence" value="ECO:0007669"/>
    <property type="project" value="TreeGrafter"/>
</dbReference>
<dbReference type="GO" id="GO:0008081">
    <property type="term" value="F:phosphoric diester hydrolase activity"/>
    <property type="evidence" value="ECO:0007669"/>
    <property type="project" value="TreeGrafter"/>
</dbReference>
<dbReference type="GO" id="GO:0008270">
    <property type="term" value="F:zinc ion binding"/>
    <property type="evidence" value="ECO:0007669"/>
    <property type="project" value="UniProtKB-UniRule"/>
</dbReference>
<dbReference type="GO" id="GO:0006284">
    <property type="term" value="P:base-excision repair"/>
    <property type="evidence" value="ECO:0007669"/>
    <property type="project" value="TreeGrafter"/>
</dbReference>
<dbReference type="CDD" id="cd00019">
    <property type="entry name" value="AP2Ec"/>
    <property type="match status" value="1"/>
</dbReference>
<dbReference type="FunFam" id="3.20.20.150:FF:000001">
    <property type="entry name" value="Probable endonuclease 4"/>
    <property type="match status" value="1"/>
</dbReference>
<dbReference type="Gene3D" id="3.20.20.150">
    <property type="entry name" value="Divalent-metal-dependent TIM barrel enzymes"/>
    <property type="match status" value="1"/>
</dbReference>
<dbReference type="HAMAP" id="MF_00152">
    <property type="entry name" value="Nfo"/>
    <property type="match status" value="1"/>
</dbReference>
<dbReference type="InterPro" id="IPR001719">
    <property type="entry name" value="AP_endonuc_2"/>
</dbReference>
<dbReference type="InterPro" id="IPR018246">
    <property type="entry name" value="AP_endonuc_F2_Zn_BS"/>
</dbReference>
<dbReference type="InterPro" id="IPR036237">
    <property type="entry name" value="Xyl_isomerase-like_sf"/>
</dbReference>
<dbReference type="InterPro" id="IPR013022">
    <property type="entry name" value="Xyl_isomerase-like_TIM-brl"/>
</dbReference>
<dbReference type="NCBIfam" id="TIGR00587">
    <property type="entry name" value="nfo"/>
    <property type="match status" value="1"/>
</dbReference>
<dbReference type="NCBIfam" id="NF002199">
    <property type="entry name" value="PRK01060.1-4"/>
    <property type="match status" value="1"/>
</dbReference>
<dbReference type="PANTHER" id="PTHR21445:SF0">
    <property type="entry name" value="APURINIC-APYRIMIDINIC ENDONUCLEASE"/>
    <property type="match status" value="1"/>
</dbReference>
<dbReference type="PANTHER" id="PTHR21445">
    <property type="entry name" value="ENDONUCLEASE IV ENDODEOXYRIBONUCLEASE IV"/>
    <property type="match status" value="1"/>
</dbReference>
<dbReference type="Pfam" id="PF01261">
    <property type="entry name" value="AP_endonuc_2"/>
    <property type="match status" value="1"/>
</dbReference>
<dbReference type="SMART" id="SM00518">
    <property type="entry name" value="AP2Ec"/>
    <property type="match status" value="1"/>
</dbReference>
<dbReference type="SUPFAM" id="SSF51658">
    <property type="entry name" value="Xylose isomerase-like"/>
    <property type="match status" value="1"/>
</dbReference>
<dbReference type="PROSITE" id="PS00729">
    <property type="entry name" value="AP_NUCLEASE_F2_1"/>
    <property type="match status" value="1"/>
</dbReference>
<dbReference type="PROSITE" id="PS00730">
    <property type="entry name" value="AP_NUCLEASE_F2_2"/>
    <property type="match status" value="1"/>
</dbReference>
<dbReference type="PROSITE" id="PS00731">
    <property type="entry name" value="AP_NUCLEASE_F2_3"/>
    <property type="match status" value="1"/>
</dbReference>
<dbReference type="PROSITE" id="PS51432">
    <property type="entry name" value="AP_NUCLEASE_F2_4"/>
    <property type="match status" value="1"/>
</dbReference>
<comment type="function">
    <text evidence="1">Endonuclease IV plays a role in DNA repair. It cleaves phosphodiester bonds at apurinic or apyrimidinic (AP) sites, generating a 3'-hydroxyl group and a 5'-terminal sugar phosphate.</text>
</comment>
<comment type="catalytic activity">
    <reaction evidence="1">
        <text>Endonucleolytic cleavage to 5'-phosphooligonucleotide end-products.</text>
        <dbReference type="EC" id="3.1.21.2"/>
    </reaction>
</comment>
<comment type="cofactor">
    <cofactor evidence="1">
        <name>Zn(2+)</name>
        <dbReference type="ChEBI" id="CHEBI:29105"/>
    </cofactor>
    <text evidence="1">Binds 3 Zn(2+) ions.</text>
</comment>
<comment type="similarity">
    <text evidence="1">Belongs to the AP endonuclease 2 family.</text>
</comment>
<reference key="1">
    <citation type="submission" date="2007-08" db="EMBL/GenBank/DDBJ databases">
        <authorList>
            <consortium name="The Vibrio harveyi Genome Sequencing Project"/>
            <person name="Bassler B."/>
            <person name="Clifton S.W."/>
            <person name="Fulton L."/>
            <person name="Delehaunty K."/>
            <person name="Fronick C."/>
            <person name="Harrison M."/>
            <person name="Markivic C."/>
            <person name="Fulton R."/>
            <person name="Tin-Wollam A.-M."/>
            <person name="Shah N."/>
            <person name="Pepin K."/>
            <person name="Nash W."/>
            <person name="Thiruvilangam P."/>
            <person name="Bhonagiri V."/>
            <person name="Waters C."/>
            <person name="Tu K.C."/>
            <person name="Irgon J."/>
            <person name="Wilson R.K."/>
        </authorList>
    </citation>
    <scope>NUCLEOTIDE SEQUENCE [LARGE SCALE GENOMIC DNA]</scope>
    <source>
        <strain>ATCC BAA-1116 / BB120</strain>
    </source>
</reference>
<sequence>MTNIKNTFGNKFIGAHVSAAGGVDQAPLRAREIGANAFALFTKNQRQWVAKPLEEKTISAFKANCKMLGFGAEHILPHDSYLINLGAPEEEKLNKSRAAFIDEMERCNQLGLTLLNFHPGSHLKKVSEQECLATIAESINLAHKAVPNVIAVIENTAGQGTNLGWKFEHLAEIIDQVENKERVGVCLDTCHTFTAGYDLRTKEDCEHTFAEFDRVVGMHYLRAMHLNDSKVEFASKVDRHHSLGKGEIGWSCFEYIAKDPRFDGIPLILETIDPDIWQQEINTLRKFHIEEIANS</sequence>